<name>MURB_SHISS</name>
<proteinExistence type="inferred from homology"/>
<accession>Q3YV08</accession>
<gene>
    <name evidence="1" type="primary">murB</name>
    <name type="ordered locus">SSON_4145</name>
</gene>
<feature type="chain" id="PRO_0000224720" description="UDP-N-acetylenolpyruvoylglucosamine reductase">
    <location>
        <begin position="1"/>
        <end position="342"/>
    </location>
</feature>
<feature type="domain" description="FAD-binding PCMH-type" evidence="1">
    <location>
        <begin position="13"/>
        <end position="183"/>
    </location>
</feature>
<feature type="active site" evidence="1">
    <location>
        <position position="159"/>
    </location>
</feature>
<feature type="active site" description="Proton donor" evidence="1">
    <location>
        <position position="229"/>
    </location>
</feature>
<feature type="active site" evidence="1">
    <location>
        <position position="325"/>
    </location>
</feature>
<evidence type="ECO:0000255" key="1">
    <source>
        <dbReference type="HAMAP-Rule" id="MF_00037"/>
    </source>
</evidence>
<dbReference type="EC" id="1.3.1.98" evidence="1"/>
<dbReference type="EMBL" id="CP000038">
    <property type="protein sequence ID" value="AAZ90654.1"/>
    <property type="molecule type" value="Genomic_DNA"/>
</dbReference>
<dbReference type="RefSeq" id="WP_001016669.1">
    <property type="nucleotide sequence ID" value="NC_007384.1"/>
</dbReference>
<dbReference type="SMR" id="Q3YV08"/>
<dbReference type="GeneID" id="93777921"/>
<dbReference type="KEGG" id="ssn:SSON_4145"/>
<dbReference type="HOGENOM" id="CLU_035304_0_0_6"/>
<dbReference type="UniPathway" id="UPA00219"/>
<dbReference type="Proteomes" id="UP000002529">
    <property type="component" value="Chromosome"/>
</dbReference>
<dbReference type="GO" id="GO:0005829">
    <property type="term" value="C:cytosol"/>
    <property type="evidence" value="ECO:0007669"/>
    <property type="project" value="TreeGrafter"/>
</dbReference>
<dbReference type="GO" id="GO:0071949">
    <property type="term" value="F:FAD binding"/>
    <property type="evidence" value="ECO:0007669"/>
    <property type="project" value="InterPro"/>
</dbReference>
<dbReference type="GO" id="GO:0008762">
    <property type="term" value="F:UDP-N-acetylmuramate dehydrogenase activity"/>
    <property type="evidence" value="ECO:0007669"/>
    <property type="project" value="UniProtKB-UniRule"/>
</dbReference>
<dbReference type="GO" id="GO:0051301">
    <property type="term" value="P:cell division"/>
    <property type="evidence" value="ECO:0007669"/>
    <property type="project" value="UniProtKB-KW"/>
</dbReference>
<dbReference type="GO" id="GO:0071555">
    <property type="term" value="P:cell wall organization"/>
    <property type="evidence" value="ECO:0007669"/>
    <property type="project" value="UniProtKB-KW"/>
</dbReference>
<dbReference type="GO" id="GO:0009252">
    <property type="term" value="P:peptidoglycan biosynthetic process"/>
    <property type="evidence" value="ECO:0007669"/>
    <property type="project" value="UniProtKB-UniRule"/>
</dbReference>
<dbReference type="GO" id="GO:0008360">
    <property type="term" value="P:regulation of cell shape"/>
    <property type="evidence" value="ECO:0007669"/>
    <property type="project" value="UniProtKB-KW"/>
</dbReference>
<dbReference type="FunFam" id="3.30.465.10:FF:000018">
    <property type="entry name" value="UDP-N-acetylenolpyruvoylglucosamine reductase"/>
    <property type="match status" value="1"/>
</dbReference>
<dbReference type="FunFam" id="3.90.78.10:FF:000002">
    <property type="entry name" value="UDP-N-acetylenolpyruvoylglucosamine reductase"/>
    <property type="match status" value="1"/>
</dbReference>
<dbReference type="Gene3D" id="3.30.465.10">
    <property type="match status" value="1"/>
</dbReference>
<dbReference type="Gene3D" id="3.90.78.10">
    <property type="entry name" value="UDP-N-acetylenolpyruvoylglucosamine reductase, C-terminal domain"/>
    <property type="match status" value="1"/>
</dbReference>
<dbReference type="Gene3D" id="3.30.43.10">
    <property type="entry name" value="Uridine Diphospho-n-acetylenolpyruvylglucosamine Reductase, domain 2"/>
    <property type="match status" value="1"/>
</dbReference>
<dbReference type="HAMAP" id="MF_00037">
    <property type="entry name" value="MurB"/>
    <property type="match status" value="1"/>
</dbReference>
<dbReference type="InterPro" id="IPR016166">
    <property type="entry name" value="FAD-bd_PCMH"/>
</dbReference>
<dbReference type="InterPro" id="IPR036318">
    <property type="entry name" value="FAD-bd_PCMH-like_sf"/>
</dbReference>
<dbReference type="InterPro" id="IPR016167">
    <property type="entry name" value="FAD-bd_PCMH_sub1"/>
</dbReference>
<dbReference type="InterPro" id="IPR016169">
    <property type="entry name" value="FAD-bd_PCMH_sub2"/>
</dbReference>
<dbReference type="InterPro" id="IPR003170">
    <property type="entry name" value="MurB"/>
</dbReference>
<dbReference type="InterPro" id="IPR011601">
    <property type="entry name" value="MurB_C"/>
</dbReference>
<dbReference type="InterPro" id="IPR036635">
    <property type="entry name" value="MurB_C_sf"/>
</dbReference>
<dbReference type="InterPro" id="IPR006094">
    <property type="entry name" value="Oxid_FAD_bind_N"/>
</dbReference>
<dbReference type="NCBIfam" id="TIGR00179">
    <property type="entry name" value="murB"/>
    <property type="match status" value="1"/>
</dbReference>
<dbReference type="NCBIfam" id="NF000755">
    <property type="entry name" value="PRK00046.1"/>
    <property type="match status" value="1"/>
</dbReference>
<dbReference type="NCBIfam" id="NF010478">
    <property type="entry name" value="PRK13903.1"/>
    <property type="match status" value="1"/>
</dbReference>
<dbReference type="PANTHER" id="PTHR21071">
    <property type="entry name" value="UDP-N-ACETYLENOLPYRUVOYLGLUCOSAMINE REDUCTASE"/>
    <property type="match status" value="1"/>
</dbReference>
<dbReference type="PANTHER" id="PTHR21071:SF4">
    <property type="entry name" value="UDP-N-ACETYLENOLPYRUVOYLGLUCOSAMINE REDUCTASE"/>
    <property type="match status" value="1"/>
</dbReference>
<dbReference type="Pfam" id="PF01565">
    <property type="entry name" value="FAD_binding_4"/>
    <property type="match status" value="1"/>
</dbReference>
<dbReference type="Pfam" id="PF02873">
    <property type="entry name" value="MurB_C"/>
    <property type="match status" value="1"/>
</dbReference>
<dbReference type="SUPFAM" id="SSF56176">
    <property type="entry name" value="FAD-binding/transporter-associated domain-like"/>
    <property type="match status" value="1"/>
</dbReference>
<dbReference type="SUPFAM" id="SSF56194">
    <property type="entry name" value="Uridine diphospho-N-Acetylenolpyruvylglucosamine reductase, MurB, C-terminal domain"/>
    <property type="match status" value="1"/>
</dbReference>
<dbReference type="PROSITE" id="PS51387">
    <property type="entry name" value="FAD_PCMH"/>
    <property type="match status" value="1"/>
</dbReference>
<sequence length="342" mass="37785">MNHSLKPWNTFGIDHNAQHIVCAEDEQQLLNAWQHATAEGQPVLILGEGSNVLFLEDYRGTVIINRIKGIEIHDEPDAWYLHVGAGENWHRLVKYTLQEGMPGLENLALIPGCVGSSPIQNIGAYGVELQRVCAYVDCVELATGKQVRLTAKECRFGYRDSIFKHEYQDRFAIVAVGLRLPKEWQPVLTYGDLTRLDPTTVTPQQVFNAVCHMRTTKLPDPKVNGNAGSFFKNPVVSAETAKALLAQFPTAPNYPQAGGSVKLAAGWLIDQCQLKGMQMGGAAVHRQQALVLINEDNAKSEDVVQLAHHVRQKVGEKFNVWLEPEVRFIGASGEVSAVETIS</sequence>
<protein>
    <recommendedName>
        <fullName evidence="1">UDP-N-acetylenolpyruvoylglucosamine reductase</fullName>
        <ecNumber evidence="1">1.3.1.98</ecNumber>
    </recommendedName>
    <alternativeName>
        <fullName evidence="1">UDP-N-acetylmuramate dehydrogenase</fullName>
    </alternativeName>
</protein>
<reference key="1">
    <citation type="journal article" date="2005" name="Nucleic Acids Res.">
        <title>Genome dynamics and diversity of Shigella species, the etiologic agents of bacillary dysentery.</title>
        <authorList>
            <person name="Yang F."/>
            <person name="Yang J."/>
            <person name="Zhang X."/>
            <person name="Chen L."/>
            <person name="Jiang Y."/>
            <person name="Yan Y."/>
            <person name="Tang X."/>
            <person name="Wang J."/>
            <person name="Xiong Z."/>
            <person name="Dong J."/>
            <person name="Xue Y."/>
            <person name="Zhu Y."/>
            <person name="Xu X."/>
            <person name="Sun L."/>
            <person name="Chen S."/>
            <person name="Nie H."/>
            <person name="Peng J."/>
            <person name="Xu J."/>
            <person name="Wang Y."/>
            <person name="Yuan Z."/>
            <person name="Wen Y."/>
            <person name="Yao Z."/>
            <person name="Shen Y."/>
            <person name="Qiang B."/>
            <person name="Hou Y."/>
            <person name="Yu J."/>
            <person name="Jin Q."/>
        </authorList>
    </citation>
    <scope>NUCLEOTIDE SEQUENCE [LARGE SCALE GENOMIC DNA]</scope>
    <source>
        <strain>Ss046</strain>
    </source>
</reference>
<organism>
    <name type="scientific">Shigella sonnei (strain Ss046)</name>
    <dbReference type="NCBI Taxonomy" id="300269"/>
    <lineage>
        <taxon>Bacteria</taxon>
        <taxon>Pseudomonadati</taxon>
        <taxon>Pseudomonadota</taxon>
        <taxon>Gammaproteobacteria</taxon>
        <taxon>Enterobacterales</taxon>
        <taxon>Enterobacteriaceae</taxon>
        <taxon>Shigella</taxon>
    </lineage>
</organism>
<keyword id="KW-0131">Cell cycle</keyword>
<keyword id="KW-0132">Cell division</keyword>
<keyword id="KW-0133">Cell shape</keyword>
<keyword id="KW-0961">Cell wall biogenesis/degradation</keyword>
<keyword id="KW-0963">Cytoplasm</keyword>
<keyword id="KW-0274">FAD</keyword>
<keyword id="KW-0285">Flavoprotein</keyword>
<keyword id="KW-0521">NADP</keyword>
<keyword id="KW-0560">Oxidoreductase</keyword>
<keyword id="KW-0573">Peptidoglycan synthesis</keyword>
<keyword id="KW-1185">Reference proteome</keyword>
<comment type="function">
    <text evidence="1">Cell wall formation.</text>
</comment>
<comment type="catalytic activity">
    <reaction evidence="1">
        <text>UDP-N-acetyl-alpha-D-muramate + NADP(+) = UDP-N-acetyl-3-O-(1-carboxyvinyl)-alpha-D-glucosamine + NADPH + H(+)</text>
        <dbReference type="Rhea" id="RHEA:12248"/>
        <dbReference type="ChEBI" id="CHEBI:15378"/>
        <dbReference type="ChEBI" id="CHEBI:57783"/>
        <dbReference type="ChEBI" id="CHEBI:58349"/>
        <dbReference type="ChEBI" id="CHEBI:68483"/>
        <dbReference type="ChEBI" id="CHEBI:70757"/>
        <dbReference type="EC" id="1.3.1.98"/>
    </reaction>
</comment>
<comment type="cofactor">
    <cofactor evidence="1">
        <name>FAD</name>
        <dbReference type="ChEBI" id="CHEBI:57692"/>
    </cofactor>
</comment>
<comment type="pathway">
    <text evidence="1">Cell wall biogenesis; peptidoglycan biosynthesis.</text>
</comment>
<comment type="subcellular location">
    <subcellularLocation>
        <location evidence="1">Cytoplasm</location>
    </subcellularLocation>
</comment>
<comment type="similarity">
    <text evidence="1">Belongs to the MurB family.</text>
</comment>